<gene>
    <name type="primary">VPS36</name>
    <name type="synonym">C13orf9</name>
    <name type="synonym">EAP45</name>
    <name type="ORF">CGI-145</name>
</gene>
<comment type="function">
    <text>Component of the ESCRT-II complex (endosomal sorting complex required for transport II), which is required for multivesicular body (MVB) formation and sorting of endosomal cargo proteins into MVBs. The MVB pathway mediates delivery of transmembrane proteins into the lumen of the lysosome for degradation. The ESCRT-II complex is probably involved in the recruitment of the ESCRT-III complex. Its ability to bind ubiquitin probably plays a role in endosomal sorting of ubiquitinated cargo proteins by ESCRT complexes. The ESCRT-II complex may also play a role in transcription regulation, possibly via its interaction with ELL. Binds phosphoinosides such as PtdIns(3,4,5)P3.</text>
</comment>
<comment type="subunit">
    <text evidence="1 2 5 6 7 8 9 10 11">Component of a complex at least composed of ELL, SNF8/EAP30, VPS25/EAP20 and VPS36/EAP45 (By similarity). Component of the endosomal sorting complex required for transport II (ESCRT-II), composed of SNF8, VPS36 and two copies of VPS25 (PubMed:14519844). Interacts with VPS25, SNF8, TSG101 and CHMP6 (PubMed:14505570, PubMed:14519844, PubMed:16973552, PubMed:18539118). Interacts (via GLUE domain) with ubiquitin (PubMed:17057716). Interacts with RILPL1 (via the C-terminal domain); which recruits ESCRT-II to the endosome membranes (PubMed:17010938). Interacts with ECPAS (PubMed:20682791).</text>
</comment>
<comment type="interaction">
    <interactant intactId="EBI-4401822">
        <id>Q86VN1</id>
    </interactant>
    <interactant intactId="EBI-747719">
        <id>Q96H20</id>
        <label>SNF8</label>
    </interactant>
    <organismsDiffer>false</organismsDiffer>
    <experiments>9</experiments>
</comment>
<comment type="interaction">
    <interactant intactId="EBI-4401822">
        <id>Q86VN1</id>
    </interactant>
    <interactant intactId="EBI-741945">
        <id>Q9BRG1</id>
        <label>VPS25</label>
    </interactant>
    <organismsDiffer>false</organismsDiffer>
    <experiments>10</experiments>
</comment>
<comment type="subcellular location">
    <subcellularLocation>
        <location>Cytoplasm</location>
    </subcellularLocation>
    <subcellularLocation>
        <location>Endosome</location>
    </subcellularLocation>
    <subcellularLocation>
        <location evidence="2">Late endosome</location>
    </subcellularLocation>
    <subcellularLocation>
        <location>Membrane</location>
    </subcellularLocation>
    <subcellularLocation>
        <location evidence="13">Nucleus</location>
    </subcellularLocation>
    <text evidence="2">Colocalizes with ubiquitinated proteins on late endosomes. Recruited to the endosome membrane to participate in vesicle formation.</text>
</comment>
<comment type="alternative products">
    <event type="alternative splicing"/>
    <isoform>
        <id>Q86VN1-1</id>
        <name>1</name>
        <sequence type="displayed"/>
    </isoform>
    <isoform>
        <id>Q86VN1-2</id>
        <name>2</name>
        <sequence type="described" ref="VSP_015342"/>
    </isoform>
</comment>
<comment type="domain">
    <text evidence="2">The GLUE domain (GRAM-like ubiquitin-binding in EAP45) mediates binding to ubiquitin and phosphoinosides.</text>
</comment>
<comment type="similarity">
    <text evidence="13">Belongs to the VPS36 family.</text>
</comment>
<comment type="sequence caution" evidence="13">
    <conflict type="erroneous initiation">
        <sequence resource="EMBL-CDS" id="BAB14451"/>
    </conflict>
    <text>Truncated N-terminus.</text>
</comment>
<protein>
    <recommendedName>
        <fullName>Vacuolar protein-sorting-associated protein 36</fullName>
    </recommendedName>
    <alternativeName>
        <fullName>ELL-associated protein of 45 kDa</fullName>
    </alternativeName>
    <alternativeName>
        <fullName>ESCRT-II complex subunit VPS36</fullName>
    </alternativeName>
</protein>
<organism>
    <name type="scientific">Homo sapiens</name>
    <name type="common">Human</name>
    <dbReference type="NCBI Taxonomy" id="9606"/>
    <lineage>
        <taxon>Eukaryota</taxon>
        <taxon>Metazoa</taxon>
        <taxon>Chordata</taxon>
        <taxon>Craniata</taxon>
        <taxon>Vertebrata</taxon>
        <taxon>Euteleostomi</taxon>
        <taxon>Mammalia</taxon>
        <taxon>Eutheria</taxon>
        <taxon>Euarchontoglires</taxon>
        <taxon>Primates</taxon>
        <taxon>Haplorrhini</taxon>
        <taxon>Catarrhini</taxon>
        <taxon>Hominidae</taxon>
        <taxon>Homo</taxon>
    </lineage>
</organism>
<evidence type="ECO:0000250" key="1">
    <source>
        <dbReference type="UniProtKB" id="P0C0A2"/>
    </source>
</evidence>
<evidence type="ECO:0000250" key="2">
    <source>
        <dbReference type="UniProtKB" id="Q91XD6"/>
    </source>
</evidence>
<evidence type="ECO:0000255" key="3"/>
<evidence type="ECO:0000255" key="4">
    <source>
        <dbReference type="PROSITE-ProRule" id="PRU00828"/>
    </source>
</evidence>
<evidence type="ECO:0000269" key="5">
    <source>
    </source>
</evidence>
<evidence type="ECO:0000269" key="6">
    <source>
    </source>
</evidence>
<evidence type="ECO:0000269" key="7">
    <source>
    </source>
</evidence>
<evidence type="ECO:0000269" key="8">
    <source>
    </source>
</evidence>
<evidence type="ECO:0000269" key="9">
    <source>
    </source>
</evidence>
<evidence type="ECO:0000269" key="10">
    <source>
    </source>
</evidence>
<evidence type="ECO:0000269" key="11">
    <source>
    </source>
</evidence>
<evidence type="ECO:0000303" key="12">
    <source>
    </source>
</evidence>
<evidence type="ECO:0000305" key="13"/>
<evidence type="ECO:0007829" key="14">
    <source>
        <dbReference type="PDB" id="2HTH"/>
    </source>
</evidence>
<evidence type="ECO:0007829" key="15">
    <source>
        <dbReference type="PDB" id="2ZME"/>
    </source>
</evidence>
<evidence type="ECO:0007829" key="16">
    <source>
        <dbReference type="PDB" id="3CUQ"/>
    </source>
</evidence>
<sequence>MDRFVWTSGLLEINETLVIQQRGVRIYDGEEKIKFDAGTLLLSTHRLIWRDQKNHECCMAILLSQIVFIEEQAAGIGKSAKIVVHLHPAPPNKEPGPFQSSKNSYIKLSFKEHGQIEFYRRLSEEMTQRRWENMPVSQSLQTNRGPQPGRIRAVGIVGIERKLEEKRKETDKNISEAFEDLSKLMIKAKEMVELSKSIANKIKDKQGDITEDETIRFKSYLLSMGIANPVTRETYGSGTQYHMQLAKQLAGILQVPLEERGGIMSLTEVYCLVNRARGMELLSPEDLVNACKMLEALKLPLRLRVFDSGVMVIELQSHKEEEMVASALETVSEKGSLTSEEFAKLVGMSVLLAKERLLLAEKMGHLCRDDSVEGLRFYPNLFMTQS</sequence>
<proteinExistence type="evidence at protein level"/>
<keyword id="KW-0002">3D-structure</keyword>
<keyword id="KW-0025">Alternative splicing</keyword>
<keyword id="KW-0175">Coiled coil</keyword>
<keyword id="KW-0963">Cytoplasm</keyword>
<keyword id="KW-0967">Endosome</keyword>
<keyword id="KW-0446">Lipid-binding</keyword>
<keyword id="KW-0472">Membrane</keyword>
<keyword id="KW-0539">Nucleus</keyword>
<keyword id="KW-0653">Protein transport</keyword>
<keyword id="KW-1267">Proteomics identification</keyword>
<keyword id="KW-1185">Reference proteome</keyword>
<keyword id="KW-0804">Transcription</keyword>
<keyword id="KW-0805">Transcription regulation</keyword>
<keyword id="KW-0813">Transport</keyword>
<name>VPS36_HUMAN</name>
<feature type="chain" id="PRO_0000215222" description="Vacuolar protein-sorting-associated protein 36">
    <location>
        <begin position="1"/>
        <end position="386"/>
    </location>
</feature>
<feature type="domain" description="GLUE N-terminal" evidence="4">
    <location>
        <begin position="1"/>
        <end position="88"/>
    </location>
</feature>
<feature type="domain" description="GLUE C-terminal" evidence="4">
    <location>
        <begin position="105"/>
        <end position="138"/>
    </location>
</feature>
<feature type="coiled-coil region" evidence="3">
    <location>
        <begin position="160"/>
        <end position="185"/>
    </location>
</feature>
<feature type="splice variant" id="VSP_015342" description="In isoform 2." evidence="12">
    <location>
        <begin position="1"/>
        <end position="58"/>
    </location>
</feature>
<feature type="mutagenesis site" description="No effect on interaction with ubiquitin." evidence="9">
    <original>L</original>
    <variation>D</variation>
    <location>
        <position position="10"/>
    </location>
</feature>
<feature type="mutagenesis site" description="Reduces affinity for ubiquitin up to 10-fold." evidence="9">
    <original>V</original>
    <variation>A</variation>
    <location>
        <position position="67"/>
    </location>
</feature>
<feature type="mutagenesis site" description="Reduces affinity for ubiquitin up to 10-fold." evidence="9">
    <original>F</original>
    <variation>A</variation>
    <location>
        <position position="68"/>
    </location>
</feature>
<feature type="mutagenesis site" description="Reduces affinity for ubiquitin up to 10-fold." evidence="9">
    <original>E</original>
    <variation>A</variation>
    <location>
        <position position="70"/>
    </location>
</feature>
<feature type="sequence conflict" description="In Ref. 3; CAI45953." evidence="13" ref="3">
    <original>M</original>
    <variation>V</variation>
    <location>
        <position position="185"/>
    </location>
</feature>
<feature type="sequence conflict" description="In Ref. 1; AAD34140." evidence="13" ref="1">
    <original>S</original>
    <variation>R</variation>
    <location>
        <position position="223"/>
    </location>
</feature>
<feature type="strand" evidence="14">
    <location>
        <begin position="17"/>
        <end position="28"/>
    </location>
</feature>
<feature type="strand" evidence="14">
    <location>
        <begin position="38"/>
        <end position="51"/>
    </location>
</feature>
<feature type="strand" evidence="14">
    <location>
        <begin position="59"/>
        <end position="62"/>
    </location>
</feature>
<feature type="helix" evidence="14">
    <location>
        <begin position="63"/>
        <end position="65"/>
    </location>
</feature>
<feature type="strand" evidence="14">
    <location>
        <begin position="66"/>
        <end position="72"/>
    </location>
</feature>
<feature type="strand" evidence="14">
    <location>
        <begin position="81"/>
        <end position="86"/>
    </location>
</feature>
<feature type="strand" evidence="14">
    <location>
        <begin position="93"/>
        <end position="95"/>
    </location>
</feature>
<feature type="strand" evidence="14">
    <location>
        <begin position="105"/>
        <end position="110"/>
    </location>
</feature>
<feature type="helix" evidence="14">
    <location>
        <begin position="115"/>
        <end position="128"/>
    </location>
</feature>
<feature type="helix" evidence="16">
    <location>
        <begin position="175"/>
        <end position="193"/>
    </location>
</feature>
<feature type="helix" evidence="16">
    <location>
        <begin position="197"/>
        <end position="199"/>
    </location>
</feature>
<feature type="helix" evidence="16">
    <location>
        <begin position="215"/>
        <end position="224"/>
    </location>
</feature>
<feature type="helix" evidence="16">
    <location>
        <begin position="229"/>
        <end position="232"/>
    </location>
</feature>
<feature type="helix" evidence="15">
    <location>
        <begin position="233"/>
        <end position="235"/>
    </location>
</feature>
<feature type="helix" evidence="16">
    <location>
        <begin position="240"/>
        <end position="259"/>
    </location>
</feature>
<feature type="strand" evidence="16">
    <location>
        <begin position="262"/>
        <end position="265"/>
    </location>
</feature>
<feature type="helix" evidence="16">
    <location>
        <begin position="266"/>
        <end position="275"/>
    </location>
</feature>
<feature type="strand" evidence="16">
    <location>
        <begin position="278"/>
        <end position="280"/>
    </location>
</feature>
<feature type="helix" evidence="16">
    <location>
        <begin position="284"/>
        <end position="292"/>
    </location>
</feature>
<feature type="turn" evidence="16">
    <location>
        <begin position="293"/>
        <end position="298"/>
    </location>
</feature>
<feature type="strand" evidence="16">
    <location>
        <begin position="300"/>
        <end position="305"/>
    </location>
</feature>
<feature type="strand" evidence="16">
    <location>
        <begin position="309"/>
        <end position="315"/>
    </location>
</feature>
<feature type="helix" evidence="16">
    <location>
        <begin position="320"/>
        <end position="323"/>
    </location>
</feature>
<feature type="helix" evidence="16">
    <location>
        <begin position="324"/>
        <end position="333"/>
    </location>
</feature>
<feature type="helix" evidence="16">
    <location>
        <begin position="339"/>
        <end position="346"/>
    </location>
</feature>
<feature type="helix" evidence="16">
    <location>
        <begin position="350"/>
        <end position="362"/>
    </location>
</feature>
<feature type="strand" evidence="16">
    <location>
        <begin position="365"/>
        <end position="373"/>
    </location>
</feature>
<feature type="strand" evidence="16">
    <location>
        <begin position="375"/>
        <end position="379"/>
    </location>
</feature>
<feature type="helix" evidence="16">
    <location>
        <begin position="381"/>
        <end position="383"/>
    </location>
</feature>
<accession>Q86VN1</accession>
<accession>A8K125</accession>
<accession>Q3ZCV7</accession>
<accession>Q5H9S1</accession>
<accession>Q5VXB6</accession>
<accession>Q9H8Z5</accession>
<accession>Q9Y3E3</accession>
<reference key="1">
    <citation type="journal article" date="2000" name="Genome Res.">
        <title>Identification of novel human genes evolutionarily conserved in Caenorhabditis elegans by comparative proteomics.</title>
        <authorList>
            <person name="Lai C.-H."/>
            <person name="Chou C.-Y."/>
            <person name="Ch'ang L.-Y."/>
            <person name="Liu C.-S."/>
            <person name="Lin W.-C."/>
        </authorList>
    </citation>
    <scope>NUCLEOTIDE SEQUENCE [LARGE SCALE MRNA] (ISOFORM 1)</scope>
</reference>
<reference key="2">
    <citation type="journal article" date="2004" name="Nat. Genet.">
        <title>Complete sequencing and characterization of 21,243 full-length human cDNAs.</title>
        <authorList>
            <person name="Ota T."/>
            <person name="Suzuki Y."/>
            <person name="Nishikawa T."/>
            <person name="Otsuki T."/>
            <person name="Sugiyama T."/>
            <person name="Irie R."/>
            <person name="Wakamatsu A."/>
            <person name="Hayashi K."/>
            <person name="Sato H."/>
            <person name="Nagai K."/>
            <person name="Kimura K."/>
            <person name="Makita H."/>
            <person name="Sekine M."/>
            <person name="Obayashi M."/>
            <person name="Nishi T."/>
            <person name="Shibahara T."/>
            <person name="Tanaka T."/>
            <person name="Ishii S."/>
            <person name="Yamamoto J."/>
            <person name="Saito K."/>
            <person name="Kawai Y."/>
            <person name="Isono Y."/>
            <person name="Nakamura Y."/>
            <person name="Nagahari K."/>
            <person name="Murakami K."/>
            <person name="Yasuda T."/>
            <person name="Iwayanagi T."/>
            <person name="Wagatsuma M."/>
            <person name="Shiratori A."/>
            <person name="Sudo H."/>
            <person name="Hosoiri T."/>
            <person name="Kaku Y."/>
            <person name="Kodaira H."/>
            <person name="Kondo H."/>
            <person name="Sugawara M."/>
            <person name="Takahashi M."/>
            <person name="Kanda K."/>
            <person name="Yokoi T."/>
            <person name="Furuya T."/>
            <person name="Kikkawa E."/>
            <person name="Omura Y."/>
            <person name="Abe K."/>
            <person name="Kamihara K."/>
            <person name="Katsuta N."/>
            <person name="Sato K."/>
            <person name="Tanikawa M."/>
            <person name="Yamazaki M."/>
            <person name="Ninomiya K."/>
            <person name="Ishibashi T."/>
            <person name="Yamashita H."/>
            <person name="Murakawa K."/>
            <person name="Fujimori K."/>
            <person name="Tanai H."/>
            <person name="Kimata M."/>
            <person name="Watanabe M."/>
            <person name="Hiraoka S."/>
            <person name="Chiba Y."/>
            <person name="Ishida S."/>
            <person name="Ono Y."/>
            <person name="Takiguchi S."/>
            <person name="Watanabe S."/>
            <person name="Yosida M."/>
            <person name="Hotuta T."/>
            <person name="Kusano J."/>
            <person name="Kanehori K."/>
            <person name="Takahashi-Fujii A."/>
            <person name="Hara H."/>
            <person name="Tanase T.-O."/>
            <person name="Nomura Y."/>
            <person name="Togiya S."/>
            <person name="Komai F."/>
            <person name="Hara R."/>
            <person name="Takeuchi K."/>
            <person name="Arita M."/>
            <person name="Imose N."/>
            <person name="Musashino K."/>
            <person name="Yuuki H."/>
            <person name="Oshima A."/>
            <person name="Sasaki N."/>
            <person name="Aotsuka S."/>
            <person name="Yoshikawa Y."/>
            <person name="Matsunawa H."/>
            <person name="Ichihara T."/>
            <person name="Shiohata N."/>
            <person name="Sano S."/>
            <person name="Moriya S."/>
            <person name="Momiyama H."/>
            <person name="Satoh N."/>
            <person name="Takami S."/>
            <person name="Terashima Y."/>
            <person name="Suzuki O."/>
            <person name="Nakagawa S."/>
            <person name="Senoh A."/>
            <person name="Mizoguchi H."/>
            <person name="Goto Y."/>
            <person name="Shimizu F."/>
            <person name="Wakebe H."/>
            <person name="Hishigaki H."/>
            <person name="Watanabe T."/>
            <person name="Sugiyama A."/>
            <person name="Takemoto M."/>
            <person name="Kawakami B."/>
            <person name="Yamazaki M."/>
            <person name="Watanabe K."/>
            <person name="Kumagai A."/>
            <person name="Itakura S."/>
            <person name="Fukuzumi Y."/>
            <person name="Fujimori Y."/>
            <person name="Komiyama M."/>
            <person name="Tashiro H."/>
            <person name="Tanigami A."/>
            <person name="Fujiwara T."/>
            <person name="Ono T."/>
            <person name="Yamada K."/>
            <person name="Fujii Y."/>
            <person name="Ozaki K."/>
            <person name="Hirao M."/>
            <person name="Ohmori Y."/>
            <person name="Kawabata A."/>
            <person name="Hikiji T."/>
            <person name="Kobatake N."/>
            <person name="Inagaki H."/>
            <person name="Ikema Y."/>
            <person name="Okamoto S."/>
            <person name="Okitani R."/>
            <person name="Kawakami T."/>
            <person name="Noguchi S."/>
            <person name="Itoh T."/>
            <person name="Shigeta K."/>
            <person name="Senba T."/>
            <person name="Matsumura K."/>
            <person name="Nakajima Y."/>
            <person name="Mizuno T."/>
            <person name="Morinaga M."/>
            <person name="Sasaki M."/>
            <person name="Togashi T."/>
            <person name="Oyama M."/>
            <person name="Hata H."/>
            <person name="Watanabe M."/>
            <person name="Komatsu T."/>
            <person name="Mizushima-Sugano J."/>
            <person name="Satoh T."/>
            <person name="Shirai Y."/>
            <person name="Takahashi Y."/>
            <person name="Nakagawa K."/>
            <person name="Okumura K."/>
            <person name="Nagase T."/>
            <person name="Nomura N."/>
            <person name="Kikuchi H."/>
            <person name="Masuho Y."/>
            <person name="Yamashita R."/>
            <person name="Nakai K."/>
            <person name="Yada T."/>
            <person name="Nakamura Y."/>
            <person name="Ohara O."/>
            <person name="Isogai T."/>
            <person name="Sugano S."/>
        </authorList>
    </citation>
    <scope>NUCLEOTIDE SEQUENCE [LARGE SCALE MRNA] (ISOFORM 1)</scope>
    <scope>NUCLEOTIDE SEQUENCE [LARGE SCALE MRNA] OF 68-386</scope>
    <source>
        <tissue>Brain</tissue>
        <tissue>Teratocarcinoma</tissue>
    </source>
</reference>
<reference key="3">
    <citation type="journal article" date="2007" name="BMC Genomics">
        <title>The full-ORF clone resource of the German cDNA consortium.</title>
        <authorList>
            <person name="Bechtel S."/>
            <person name="Rosenfelder H."/>
            <person name="Duda A."/>
            <person name="Schmidt C.P."/>
            <person name="Ernst U."/>
            <person name="Wellenreuther R."/>
            <person name="Mehrle A."/>
            <person name="Schuster C."/>
            <person name="Bahr A."/>
            <person name="Bloecker H."/>
            <person name="Heubner D."/>
            <person name="Hoerlein A."/>
            <person name="Michel G."/>
            <person name="Wedler H."/>
            <person name="Koehrer K."/>
            <person name="Ottenwaelder B."/>
            <person name="Poustka A."/>
            <person name="Wiemann S."/>
            <person name="Schupp I."/>
        </authorList>
    </citation>
    <scope>NUCLEOTIDE SEQUENCE [LARGE SCALE MRNA] (ISOFORM 2)</scope>
    <source>
        <tissue>Retina</tissue>
    </source>
</reference>
<reference key="4">
    <citation type="journal article" date="2004" name="Nature">
        <title>The DNA sequence and analysis of human chromosome 13.</title>
        <authorList>
            <person name="Dunham A."/>
            <person name="Matthews L.H."/>
            <person name="Burton J."/>
            <person name="Ashurst J.L."/>
            <person name="Howe K.L."/>
            <person name="Ashcroft K.J."/>
            <person name="Beare D.M."/>
            <person name="Burford D.C."/>
            <person name="Hunt S.E."/>
            <person name="Griffiths-Jones S."/>
            <person name="Jones M.C."/>
            <person name="Keenan S.J."/>
            <person name="Oliver K."/>
            <person name="Scott C.E."/>
            <person name="Ainscough R."/>
            <person name="Almeida J.P."/>
            <person name="Ambrose K.D."/>
            <person name="Andrews D.T."/>
            <person name="Ashwell R.I.S."/>
            <person name="Babbage A.K."/>
            <person name="Bagguley C.L."/>
            <person name="Bailey J."/>
            <person name="Bannerjee R."/>
            <person name="Barlow K.F."/>
            <person name="Bates K."/>
            <person name="Beasley H."/>
            <person name="Bird C.P."/>
            <person name="Bray-Allen S."/>
            <person name="Brown A.J."/>
            <person name="Brown J.Y."/>
            <person name="Burrill W."/>
            <person name="Carder C."/>
            <person name="Carter N.P."/>
            <person name="Chapman J.C."/>
            <person name="Clamp M.E."/>
            <person name="Clark S.Y."/>
            <person name="Clarke G."/>
            <person name="Clee C.M."/>
            <person name="Clegg S.C."/>
            <person name="Cobley V."/>
            <person name="Collins J.E."/>
            <person name="Corby N."/>
            <person name="Coville G.J."/>
            <person name="Deloukas P."/>
            <person name="Dhami P."/>
            <person name="Dunham I."/>
            <person name="Dunn M."/>
            <person name="Earthrowl M.E."/>
            <person name="Ellington A.G."/>
            <person name="Faulkner L."/>
            <person name="Frankish A.G."/>
            <person name="Frankland J."/>
            <person name="French L."/>
            <person name="Garner P."/>
            <person name="Garnett J."/>
            <person name="Gilbert J.G.R."/>
            <person name="Gilson C.J."/>
            <person name="Ghori J."/>
            <person name="Grafham D.V."/>
            <person name="Gribble S.M."/>
            <person name="Griffiths C."/>
            <person name="Hall R.E."/>
            <person name="Hammond S."/>
            <person name="Harley J.L."/>
            <person name="Hart E.A."/>
            <person name="Heath P.D."/>
            <person name="Howden P.J."/>
            <person name="Huckle E.J."/>
            <person name="Hunt P.J."/>
            <person name="Hunt A.R."/>
            <person name="Johnson C."/>
            <person name="Johnson D."/>
            <person name="Kay M."/>
            <person name="Kimberley A.M."/>
            <person name="King A."/>
            <person name="Laird G.K."/>
            <person name="Langford C.J."/>
            <person name="Lawlor S."/>
            <person name="Leongamornlert D.A."/>
            <person name="Lloyd D.M."/>
            <person name="Lloyd C."/>
            <person name="Loveland J.E."/>
            <person name="Lovell J."/>
            <person name="Martin S."/>
            <person name="Mashreghi-Mohammadi M."/>
            <person name="McLaren S.J."/>
            <person name="McMurray A."/>
            <person name="Milne S."/>
            <person name="Moore M.J.F."/>
            <person name="Nickerson T."/>
            <person name="Palmer S.A."/>
            <person name="Pearce A.V."/>
            <person name="Peck A.I."/>
            <person name="Pelan S."/>
            <person name="Phillimore B."/>
            <person name="Porter K.M."/>
            <person name="Rice C.M."/>
            <person name="Searle S."/>
            <person name="Sehra H.K."/>
            <person name="Shownkeen R."/>
            <person name="Skuce C.D."/>
            <person name="Smith M."/>
            <person name="Steward C.A."/>
            <person name="Sycamore N."/>
            <person name="Tester J."/>
            <person name="Thomas D.W."/>
            <person name="Tracey A."/>
            <person name="Tromans A."/>
            <person name="Tubby B."/>
            <person name="Wall M."/>
            <person name="Wallis J.M."/>
            <person name="West A.P."/>
            <person name="Whitehead S.L."/>
            <person name="Willey D.L."/>
            <person name="Wilming L."/>
            <person name="Wray P.W."/>
            <person name="Wright M.W."/>
            <person name="Young L."/>
            <person name="Coulson A."/>
            <person name="Durbin R.M."/>
            <person name="Hubbard T."/>
            <person name="Sulston J.E."/>
            <person name="Beck S."/>
            <person name="Bentley D.R."/>
            <person name="Rogers J."/>
            <person name="Ross M.T."/>
        </authorList>
    </citation>
    <scope>NUCLEOTIDE SEQUENCE [LARGE SCALE GENOMIC DNA]</scope>
</reference>
<reference key="5">
    <citation type="submission" date="2005-07" db="EMBL/GenBank/DDBJ databases">
        <authorList>
            <person name="Mural R.J."/>
            <person name="Istrail S."/>
            <person name="Sutton G.G."/>
            <person name="Florea L."/>
            <person name="Halpern A.L."/>
            <person name="Mobarry C.M."/>
            <person name="Lippert R."/>
            <person name="Walenz B."/>
            <person name="Shatkay H."/>
            <person name="Dew I."/>
            <person name="Miller J.R."/>
            <person name="Flanigan M.J."/>
            <person name="Edwards N.J."/>
            <person name="Bolanos R."/>
            <person name="Fasulo D."/>
            <person name="Halldorsson B.V."/>
            <person name="Hannenhalli S."/>
            <person name="Turner R."/>
            <person name="Yooseph S."/>
            <person name="Lu F."/>
            <person name="Nusskern D.R."/>
            <person name="Shue B.C."/>
            <person name="Zheng X.H."/>
            <person name="Zhong F."/>
            <person name="Delcher A.L."/>
            <person name="Huson D.H."/>
            <person name="Kravitz S.A."/>
            <person name="Mouchard L."/>
            <person name="Reinert K."/>
            <person name="Remington K.A."/>
            <person name="Clark A.G."/>
            <person name="Waterman M.S."/>
            <person name="Eichler E.E."/>
            <person name="Adams M.D."/>
            <person name="Hunkapiller M.W."/>
            <person name="Myers E.W."/>
            <person name="Venter J.C."/>
        </authorList>
    </citation>
    <scope>NUCLEOTIDE SEQUENCE [LARGE SCALE GENOMIC DNA]</scope>
</reference>
<reference key="6">
    <citation type="journal article" date="2004" name="Genome Res.">
        <title>The status, quality, and expansion of the NIH full-length cDNA project: the Mammalian Gene Collection (MGC).</title>
        <authorList>
            <consortium name="The MGC Project Team"/>
        </authorList>
    </citation>
    <scope>NUCLEOTIDE SEQUENCE [LARGE SCALE MRNA] (ISOFORM 1)</scope>
    <source>
        <tissue>Brain</tissue>
    </source>
</reference>
<reference key="7">
    <citation type="journal article" date="2003" name="Cell">
        <title>The protein network of HIV budding.</title>
        <authorList>
            <person name="von Schwedler U.K."/>
            <person name="Stuchell M."/>
            <person name="Mueller B."/>
            <person name="Ward D.M."/>
            <person name="Chung H.-Y."/>
            <person name="Morita E."/>
            <person name="Wang H.E."/>
            <person name="Davis T."/>
            <person name="He G.P."/>
            <person name="Cimbora D.M."/>
            <person name="Scott A."/>
            <person name="Kraeusslich H.-G."/>
            <person name="Kaplan J."/>
            <person name="Morham S.G."/>
            <person name="Sundquist W.I."/>
        </authorList>
    </citation>
    <scope>INTERACTION WITH VPS25; SNF8 AND TSG101</scope>
</reference>
<reference key="8">
    <citation type="journal article" date="2003" name="Proc. Natl. Acad. Sci. U.S.A.">
        <title>Divergent retroviral late-budding domains recruit vacuolar protein sorting factors by using alternative adaptor proteins.</title>
        <authorList>
            <person name="Martin-Serrano J."/>
            <person name="Yarovoy A."/>
            <person name="Perez-Caballero D."/>
            <person name="Bieniasz P.D."/>
        </authorList>
    </citation>
    <scope>IDENTIFICATION IN THE ESCRT-II COMPLEX</scope>
    <scope>INTERACTION WITH VPS25; SNF8 AND CHMP6</scope>
</reference>
<reference key="9">
    <citation type="journal article" date="2003" name="Proc. Natl. Acad. Sci. U.S.A.">
        <authorList>
            <person name="Martin-Serrano J."/>
            <person name="Yarovoy A."/>
            <person name="Perez-Caballero D."/>
            <person name="Bieniasz P.D."/>
        </authorList>
    </citation>
    <scope>ERRATUM OF PUBMED:14519844</scope>
</reference>
<reference key="10">
    <citation type="journal article" date="2006" name="Biochem. Biophys. Res. Commun.">
        <title>RILP interacts with VPS22 and VPS36 of ESCRT-II and regulates their membrane recruitment.</title>
        <authorList>
            <person name="Wang T."/>
            <person name="Hong W."/>
        </authorList>
    </citation>
    <scope>INTERACTION WITH VPS25 AND RILPL1</scope>
    <scope>SUBCELLULAR LOCATION</scope>
</reference>
<reference key="11">
    <citation type="journal article" date="2006" name="J. Virol.">
        <title>Human ESCRT-II complex and its role in human immunodeficiency virus type 1 release.</title>
        <authorList>
            <person name="Langelier C."/>
            <person name="von Schwedler U.K."/>
            <person name="Fisher R.D."/>
            <person name="De Domenico I."/>
            <person name="White P.L."/>
            <person name="Hill C.P."/>
            <person name="Kaplan J."/>
            <person name="Ward D."/>
            <person name="Sundquist W.I."/>
        </authorList>
    </citation>
    <scope>INTERACTION WITH VPS25; SNF8 AND TSG101</scope>
    <scope>UBIQUITIN-BINDING</scope>
    <scope>SUBCELLULAR LOCATION</scope>
</reference>
<reference key="12">
    <citation type="journal article" date="2007" name="Traffic">
        <title>Vps22/EAP30 in ESCRT-II mediates endosomal sorting of growth factor and chemokine receptors destined for lysosomal degradation.</title>
        <authorList>
            <person name="Maleroed L."/>
            <person name="Stuffers S."/>
            <person name="Brech A."/>
            <person name="Stenmark H."/>
        </authorList>
    </citation>
    <scope>SUBCELLULAR LOCATION</scope>
</reference>
<reference key="13">
    <citation type="journal article" date="2010" name="J. Biol. Chem.">
        <title>A protein interaction network for Ecm29 links the 26 S proteasome to molecular motors and endosomal components.</title>
        <authorList>
            <person name="Gorbea C."/>
            <person name="Pratt G."/>
            <person name="Ustrell V."/>
            <person name="Bell R."/>
            <person name="Sahasrabudhe S."/>
            <person name="Hughes R.E."/>
            <person name="Rechsteiner M."/>
        </authorList>
    </citation>
    <scope>SUBCELLULAR LOCATION</scope>
    <scope>INTERACTION WITH ECPAS</scope>
</reference>
<reference key="14">
    <citation type="journal article" date="2011" name="BMC Syst. Biol.">
        <title>Initial characterization of the human central proteome.</title>
        <authorList>
            <person name="Burkard T.R."/>
            <person name="Planyavsky M."/>
            <person name="Kaupe I."/>
            <person name="Breitwieser F.P."/>
            <person name="Buerckstuemmer T."/>
            <person name="Bennett K.L."/>
            <person name="Superti-Furga G."/>
            <person name="Colinge J."/>
        </authorList>
    </citation>
    <scope>IDENTIFICATION BY MASS SPECTROMETRY [LARGE SCALE ANALYSIS]</scope>
</reference>
<reference key="15">
    <citation type="journal article" date="2006" name="Nat. Struct. Mol. Biol.">
        <title>Structural basis for ubiquitin recognition by the human ESCRT-II EAP45 GLUE domain.</title>
        <authorList>
            <person name="Alam S.L."/>
            <person name="Langelier C."/>
            <person name="Whitby F.G."/>
            <person name="Koirala S."/>
            <person name="Robinson H."/>
            <person name="Hill C.P."/>
            <person name="Sundquist W.I."/>
        </authorList>
    </citation>
    <scope>X-RAY CRYSTALLOGRAPHY (2.7 ANGSTROMS) OF 1-138 IN COMPLEX WITH UBIQUITIN</scope>
    <scope>MUTAGENESIS OF LEU-10; VAL-67; PHE-68 AND GLU-70</scope>
</reference>
<reference key="16">
    <citation type="journal article" date="2008" name="Dev. Cell">
        <title>Integrated structural model and membrane targeting mechanism of the human ESCRT-II complex.</title>
        <authorList>
            <person name="Im Y.J."/>
            <person name="Hurley J.H."/>
        </authorList>
    </citation>
    <scope>X-RAY CRYSTALLOGRAPHY (2.61 ANGSTROMS) OF 169-386 IN COMPLEX WITH VPS25 AND SNF8</scope>
</reference>
<dbReference type="EMBL" id="AF151903">
    <property type="protein sequence ID" value="AAD34140.1"/>
    <property type="molecule type" value="mRNA"/>
</dbReference>
<dbReference type="EMBL" id="AK023182">
    <property type="protein sequence ID" value="BAB14451.1"/>
    <property type="status" value="ALT_INIT"/>
    <property type="molecule type" value="mRNA"/>
</dbReference>
<dbReference type="EMBL" id="AK289740">
    <property type="protein sequence ID" value="BAF82429.1"/>
    <property type="molecule type" value="mRNA"/>
</dbReference>
<dbReference type="EMBL" id="CR933653">
    <property type="protein sequence ID" value="CAI45953.1"/>
    <property type="molecule type" value="mRNA"/>
</dbReference>
<dbReference type="EMBL" id="AL359513">
    <property type="status" value="NOT_ANNOTATED_CDS"/>
    <property type="molecule type" value="Genomic_DNA"/>
</dbReference>
<dbReference type="EMBL" id="CH471274">
    <property type="protein sequence ID" value="EAW55895.1"/>
    <property type="molecule type" value="Genomic_DNA"/>
</dbReference>
<dbReference type="EMBL" id="BC037279">
    <property type="protein sequence ID" value="AAH37279.1"/>
    <property type="molecule type" value="mRNA"/>
</dbReference>
<dbReference type="EMBL" id="BC050439">
    <property type="protein sequence ID" value="AAH50439.1"/>
    <property type="molecule type" value="mRNA"/>
</dbReference>
<dbReference type="CCDS" id="CCDS73577.1">
    <molecule id="Q86VN1-2"/>
</dbReference>
<dbReference type="CCDS" id="CCDS9434.1">
    <molecule id="Q86VN1-1"/>
</dbReference>
<dbReference type="RefSeq" id="NP_001269098.1">
    <molecule id="Q86VN1-2"/>
    <property type="nucleotide sequence ID" value="NM_001282169.2"/>
</dbReference>
<dbReference type="RefSeq" id="NP_057159.2">
    <molecule id="Q86VN1-1"/>
    <property type="nucleotide sequence ID" value="NM_016075.4"/>
</dbReference>
<dbReference type="PDB" id="2HTH">
    <property type="method" value="X-ray"/>
    <property type="resolution" value="2.70 A"/>
    <property type="chains" value="B=1-138"/>
</dbReference>
<dbReference type="PDB" id="2ZME">
    <property type="method" value="X-ray"/>
    <property type="resolution" value="2.90 A"/>
    <property type="chains" value="B=149-386"/>
</dbReference>
<dbReference type="PDB" id="3CUQ">
    <property type="method" value="X-ray"/>
    <property type="resolution" value="2.61 A"/>
    <property type="chains" value="B=169-386"/>
</dbReference>
<dbReference type="PDBsum" id="2HTH"/>
<dbReference type="PDBsum" id="2ZME"/>
<dbReference type="PDBsum" id="3CUQ"/>
<dbReference type="SMR" id="Q86VN1"/>
<dbReference type="BioGRID" id="119234">
    <property type="interactions" value="62"/>
</dbReference>
<dbReference type="ComplexPortal" id="CPX-2506">
    <property type="entry name" value="ESCRT-II complex"/>
</dbReference>
<dbReference type="CORUM" id="Q86VN1"/>
<dbReference type="DIP" id="DIP-29249N"/>
<dbReference type="FunCoup" id="Q86VN1">
    <property type="interactions" value="2178"/>
</dbReference>
<dbReference type="IntAct" id="Q86VN1">
    <property type="interactions" value="19"/>
</dbReference>
<dbReference type="MINT" id="Q86VN1"/>
<dbReference type="STRING" id="9606.ENSP00000367299"/>
<dbReference type="iPTMnet" id="Q86VN1"/>
<dbReference type="MetOSite" id="Q86VN1"/>
<dbReference type="PhosphoSitePlus" id="Q86VN1"/>
<dbReference type="BioMuta" id="VPS36"/>
<dbReference type="DMDM" id="73920464"/>
<dbReference type="jPOST" id="Q86VN1"/>
<dbReference type="MassIVE" id="Q86VN1"/>
<dbReference type="PaxDb" id="9606-ENSP00000367299"/>
<dbReference type="PeptideAtlas" id="Q86VN1"/>
<dbReference type="ProteomicsDB" id="70043">
    <molecule id="Q86VN1-1"/>
</dbReference>
<dbReference type="ProteomicsDB" id="70044">
    <molecule id="Q86VN1-2"/>
</dbReference>
<dbReference type="Pumba" id="Q86VN1"/>
<dbReference type="Antibodypedia" id="24193">
    <property type="antibodies" value="75 antibodies from 21 providers"/>
</dbReference>
<dbReference type="DNASU" id="51028"/>
<dbReference type="Ensembl" id="ENST00000378060.9">
    <molecule id="Q86VN1-1"/>
    <property type="protein sequence ID" value="ENSP00000367299.3"/>
    <property type="gene ID" value="ENSG00000136100.14"/>
</dbReference>
<dbReference type="Ensembl" id="ENST00000611132.4">
    <molecule id="Q86VN1-2"/>
    <property type="protein sequence ID" value="ENSP00000484968.1"/>
    <property type="gene ID" value="ENSG00000136100.14"/>
</dbReference>
<dbReference type="GeneID" id="51028"/>
<dbReference type="KEGG" id="hsa:51028"/>
<dbReference type="MANE-Select" id="ENST00000378060.9">
    <property type="protein sequence ID" value="ENSP00000367299.3"/>
    <property type="RefSeq nucleotide sequence ID" value="NM_016075.4"/>
    <property type="RefSeq protein sequence ID" value="NP_057159.2"/>
</dbReference>
<dbReference type="UCSC" id="uc001vgq.4">
    <molecule id="Q86VN1-1"/>
    <property type="organism name" value="human"/>
</dbReference>
<dbReference type="AGR" id="HGNC:20312"/>
<dbReference type="CTD" id="51028"/>
<dbReference type="DisGeNET" id="51028"/>
<dbReference type="GeneCards" id="VPS36"/>
<dbReference type="HGNC" id="HGNC:20312">
    <property type="gene designation" value="VPS36"/>
</dbReference>
<dbReference type="HPA" id="ENSG00000136100">
    <property type="expression patterns" value="Low tissue specificity"/>
</dbReference>
<dbReference type="MIM" id="610903">
    <property type="type" value="gene"/>
</dbReference>
<dbReference type="neXtProt" id="NX_Q86VN1"/>
<dbReference type="OpenTargets" id="ENSG00000136100"/>
<dbReference type="PharmGKB" id="PA134990943"/>
<dbReference type="VEuPathDB" id="HostDB:ENSG00000136100"/>
<dbReference type="eggNOG" id="KOG2760">
    <property type="taxonomic scope" value="Eukaryota"/>
</dbReference>
<dbReference type="GeneTree" id="ENSGT00390000017209"/>
<dbReference type="HOGENOM" id="CLU_015433_0_0_1"/>
<dbReference type="InParanoid" id="Q86VN1"/>
<dbReference type="OMA" id="TLNARVW"/>
<dbReference type="OrthoDB" id="271448at2759"/>
<dbReference type="PAN-GO" id="Q86VN1">
    <property type="GO annotations" value="4 GO annotations based on evolutionary models"/>
</dbReference>
<dbReference type="PhylomeDB" id="Q86VN1"/>
<dbReference type="TreeFam" id="TF314770"/>
<dbReference type="PathwayCommons" id="Q86VN1"/>
<dbReference type="Reactome" id="R-HSA-917729">
    <property type="pathway name" value="Endosomal Sorting Complex Required For Transport (ESCRT)"/>
</dbReference>
<dbReference type="Reactome" id="R-HSA-9610379">
    <property type="pathway name" value="HCMV Late Events"/>
</dbReference>
<dbReference type="SignaLink" id="Q86VN1"/>
<dbReference type="BioGRID-ORCS" id="51028">
    <property type="hits" value="86 hits in 1172 CRISPR screens"/>
</dbReference>
<dbReference type="ChiTaRS" id="VPS36">
    <property type="organism name" value="human"/>
</dbReference>
<dbReference type="EvolutionaryTrace" id="Q86VN1"/>
<dbReference type="GeneWiki" id="VPS36"/>
<dbReference type="GenomeRNAi" id="51028"/>
<dbReference type="Pharos" id="Q86VN1">
    <property type="development level" value="Tbio"/>
</dbReference>
<dbReference type="PRO" id="PR:Q86VN1"/>
<dbReference type="Proteomes" id="UP000005640">
    <property type="component" value="Chromosome 13"/>
</dbReference>
<dbReference type="RNAct" id="Q86VN1">
    <property type="molecule type" value="protein"/>
</dbReference>
<dbReference type="Bgee" id="ENSG00000136100">
    <property type="expression patterns" value="Expressed in upper arm skin and 186 other cell types or tissues"/>
</dbReference>
<dbReference type="ExpressionAtlas" id="Q86VN1">
    <property type="expression patterns" value="baseline and differential"/>
</dbReference>
<dbReference type="GO" id="GO:0005829">
    <property type="term" value="C:cytosol"/>
    <property type="evidence" value="ECO:0000314"/>
    <property type="project" value="UniProtKB"/>
</dbReference>
<dbReference type="GO" id="GO:0005768">
    <property type="term" value="C:endosome"/>
    <property type="evidence" value="ECO:0000314"/>
    <property type="project" value="UniProtKB"/>
</dbReference>
<dbReference type="GO" id="GO:0000814">
    <property type="term" value="C:ESCRT II complex"/>
    <property type="evidence" value="ECO:0000314"/>
    <property type="project" value="UniProtKB"/>
</dbReference>
<dbReference type="GO" id="GO:0070062">
    <property type="term" value="C:extracellular exosome"/>
    <property type="evidence" value="ECO:0007005"/>
    <property type="project" value="UniProtKB"/>
</dbReference>
<dbReference type="GO" id="GO:0031902">
    <property type="term" value="C:late endosome membrane"/>
    <property type="evidence" value="ECO:0000314"/>
    <property type="project" value="UniProtKB"/>
</dbReference>
<dbReference type="GO" id="GO:0005764">
    <property type="term" value="C:lysosome"/>
    <property type="evidence" value="ECO:0007669"/>
    <property type="project" value="Ensembl"/>
</dbReference>
<dbReference type="GO" id="GO:0005634">
    <property type="term" value="C:nucleus"/>
    <property type="evidence" value="ECO:0007669"/>
    <property type="project" value="UniProtKB-SubCell"/>
</dbReference>
<dbReference type="GO" id="GO:0032266">
    <property type="term" value="F:phosphatidylinositol-3-phosphate binding"/>
    <property type="evidence" value="ECO:0007669"/>
    <property type="project" value="InterPro"/>
</dbReference>
<dbReference type="GO" id="GO:0043130">
    <property type="term" value="F:ubiquitin binding"/>
    <property type="evidence" value="ECO:0000315"/>
    <property type="project" value="UniProtKB"/>
</dbReference>
<dbReference type="GO" id="GO:0016236">
    <property type="term" value="P:macroautophagy"/>
    <property type="evidence" value="ECO:0000304"/>
    <property type="project" value="ParkinsonsUK-UCL"/>
</dbReference>
<dbReference type="GO" id="GO:0090148">
    <property type="term" value="P:membrane fission"/>
    <property type="evidence" value="ECO:0000303"/>
    <property type="project" value="ComplexPortal"/>
</dbReference>
<dbReference type="GO" id="GO:0036258">
    <property type="term" value="P:multivesicular body assembly"/>
    <property type="evidence" value="ECO:0000304"/>
    <property type="project" value="ParkinsonsUK-UCL"/>
</dbReference>
<dbReference type="GO" id="GO:0043328">
    <property type="term" value="P:protein transport to vacuole involved in ubiquitin-dependent protein catabolic process via the multivesicular body sorting pathway"/>
    <property type="evidence" value="ECO:0000318"/>
    <property type="project" value="GO_Central"/>
</dbReference>
<dbReference type="CDD" id="cd13226">
    <property type="entry name" value="PH-GRAM-like_Eap45"/>
    <property type="match status" value="1"/>
</dbReference>
<dbReference type="DisProt" id="DP02599"/>
<dbReference type="FunFam" id="1.10.10.10:FF:000203">
    <property type="entry name" value="Vacuolar protein sorting 36 homolog"/>
    <property type="match status" value="1"/>
</dbReference>
<dbReference type="FunFam" id="2.30.29.30:FF:000241">
    <property type="entry name" value="Vacuolar protein sorting 36 homolog"/>
    <property type="match status" value="1"/>
</dbReference>
<dbReference type="FunFam" id="1.10.10.10:FF:000170">
    <property type="entry name" value="Vacuolar protein-sorting-associated protein 36"/>
    <property type="match status" value="1"/>
</dbReference>
<dbReference type="Gene3D" id="6.10.140.260">
    <property type="match status" value="1"/>
</dbReference>
<dbReference type="Gene3D" id="2.30.29.30">
    <property type="entry name" value="Pleckstrin-homology domain (PH domain)/Phosphotyrosine-binding domain (PTB)"/>
    <property type="match status" value="1"/>
</dbReference>
<dbReference type="Gene3D" id="1.10.10.10">
    <property type="entry name" value="Winged helix-like DNA-binding domain superfamily/Winged helix DNA-binding domain"/>
    <property type="match status" value="2"/>
</dbReference>
<dbReference type="IDEAL" id="IID00218"/>
<dbReference type="InterPro" id="IPR021648">
    <property type="entry name" value="GLUE_dom"/>
</dbReference>
<dbReference type="InterPro" id="IPR011993">
    <property type="entry name" value="PH-like_dom_sf"/>
</dbReference>
<dbReference type="InterPro" id="IPR040608">
    <property type="entry name" value="Snf8/Vps36"/>
</dbReference>
<dbReference type="InterPro" id="IPR037855">
    <property type="entry name" value="Vps36"/>
</dbReference>
<dbReference type="InterPro" id="IPR036388">
    <property type="entry name" value="WH-like_DNA-bd_sf"/>
</dbReference>
<dbReference type="InterPro" id="IPR036390">
    <property type="entry name" value="WH_DNA-bd_sf"/>
</dbReference>
<dbReference type="PANTHER" id="PTHR13128">
    <property type="entry name" value="VACUOLAR PROTEIN-SORTING-ASSOCIATED PROTEIN 36"/>
    <property type="match status" value="1"/>
</dbReference>
<dbReference type="PANTHER" id="PTHR13128:SF12">
    <property type="entry name" value="VACUOLAR PROTEIN-SORTING-ASSOCIATED PROTEIN 36"/>
    <property type="match status" value="1"/>
</dbReference>
<dbReference type="Pfam" id="PF04157">
    <property type="entry name" value="EAP30"/>
    <property type="match status" value="1"/>
</dbReference>
<dbReference type="Pfam" id="PF11605">
    <property type="entry name" value="Vps36_ESCRT-II"/>
    <property type="match status" value="1"/>
</dbReference>
<dbReference type="SUPFAM" id="SSF50729">
    <property type="entry name" value="PH domain-like"/>
    <property type="match status" value="1"/>
</dbReference>
<dbReference type="SUPFAM" id="SSF46785">
    <property type="entry name" value="Winged helix' DNA-binding domain"/>
    <property type="match status" value="2"/>
</dbReference>
<dbReference type="PROSITE" id="PS51495">
    <property type="entry name" value="GLUE"/>
    <property type="match status" value="1"/>
</dbReference>